<feature type="chain" id="PRO_1000134963" description="Imidazole glycerol phosphate synthase subunit HisF">
    <location>
        <begin position="1"/>
        <end position="252"/>
    </location>
</feature>
<feature type="active site" evidence="1">
    <location>
        <position position="11"/>
    </location>
</feature>
<feature type="active site" evidence="1">
    <location>
        <position position="130"/>
    </location>
</feature>
<name>HIS6_AZOPC</name>
<reference key="1">
    <citation type="journal article" date="2008" name="Science">
        <title>Genome of an endosymbiont coupling N2 fixation to cellulolysis within RT protist cells in termite gut.</title>
        <authorList>
            <person name="Hongoh Y."/>
            <person name="Sharma V.K."/>
            <person name="Prakash T."/>
            <person name="Noda S."/>
            <person name="Toh H."/>
            <person name="Taylor T.D."/>
            <person name="Kudo T."/>
            <person name="Sakaki Y."/>
            <person name="Toyoda A."/>
            <person name="Hattori M."/>
            <person name="Ohkuma M."/>
        </authorList>
    </citation>
    <scope>NUCLEOTIDE SEQUENCE [LARGE SCALE GENOMIC DNA]</scope>
</reference>
<comment type="function">
    <text evidence="1">IGPS catalyzes the conversion of PRFAR and glutamine to IGP, AICAR and glutamate. The HisF subunit catalyzes the cyclization activity that produces IGP and AICAR from PRFAR using the ammonia provided by the HisH subunit.</text>
</comment>
<comment type="catalytic activity">
    <reaction evidence="1">
        <text>5-[(5-phospho-1-deoxy-D-ribulos-1-ylimino)methylamino]-1-(5-phospho-beta-D-ribosyl)imidazole-4-carboxamide + L-glutamine = D-erythro-1-(imidazol-4-yl)glycerol 3-phosphate + 5-amino-1-(5-phospho-beta-D-ribosyl)imidazole-4-carboxamide + L-glutamate + H(+)</text>
        <dbReference type="Rhea" id="RHEA:24793"/>
        <dbReference type="ChEBI" id="CHEBI:15378"/>
        <dbReference type="ChEBI" id="CHEBI:29985"/>
        <dbReference type="ChEBI" id="CHEBI:58278"/>
        <dbReference type="ChEBI" id="CHEBI:58359"/>
        <dbReference type="ChEBI" id="CHEBI:58475"/>
        <dbReference type="ChEBI" id="CHEBI:58525"/>
        <dbReference type="EC" id="4.3.2.10"/>
    </reaction>
</comment>
<comment type="pathway">
    <text evidence="1">Amino-acid biosynthesis; L-histidine biosynthesis; L-histidine from 5-phospho-alpha-D-ribose 1-diphosphate: step 5/9.</text>
</comment>
<comment type="subunit">
    <text evidence="1">Heterodimer of HisH and HisF.</text>
</comment>
<comment type="subcellular location">
    <subcellularLocation>
        <location evidence="1">Cytoplasm</location>
    </subcellularLocation>
</comment>
<comment type="similarity">
    <text evidence="1">Belongs to the HisA/HisF family.</text>
</comment>
<accession>B6YQ30</accession>
<protein>
    <recommendedName>
        <fullName evidence="1">Imidazole glycerol phosphate synthase subunit HisF</fullName>
        <ecNumber evidence="1">4.3.2.10</ecNumber>
    </recommendedName>
    <alternativeName>
        <fullName evidence="1">IGP synthase cyclase subunit</fullName>
    </alternativeName>
    <alternativeName>
        <fullName evidence="1">IGP synthase subunit HisF</fullName>
    </alternativeName>
    <alternativeName>
        <fullName evidence="1">ImGP synthase subunit HisF</fullName>
        <shortName evidence="1">IGPS subunit HisF</shortName>
    </alternativeName>
</protein>
<evidence type="ECO:0000255" key="1">
    <source>
        <dbReference type="HAMAP-Rule" id="MF_01013"/>
    </source>
</evidence>
<keyword id="KW-0028">Amino-acid biosynthesis</keyword>
<keyword id="KW-0963">Cytoplasm</keyword>
<keyword id="KW-0368">Histidine biosynthesis</keyword>
<keyword id="KW-0456">Lyase</keyword>
<keyword id="KW-1185">Reference proteome</keyword>
<dbReference type="EC" id="4.3.2.10" evidence="1"/>
<dbReference type="EMBL" id="AP010656">
    <property type="protein sequence ID" value="BAG83302.1"/>
    <property type="molecule type" value="Genomic_DNA"/>
</dbReference>
<dbReference type="RefSeq" id="WP_012573063.1">
    <property type="nucleotide sequence ID" value="NC_011565.1"/>
</dbReference>
<dbReference type="SMR" id="B6YQ30"/>
<dbReference type="STRING" id="511995.CFPG_039"/>
<dbReference type="KEGG" id="aps:CFPG_039"/>
<dbReference type="eggNOG" id="COG0107">
    <property type="taxonomic scope" value="Bacteria"/>
</dbReference>
<dbReference type="HOGENOM" id="CLU_048577_4_0_10"/>
<dbReference type="OrthoDB" id="9781903at2"/>
<dbReference type="UniPathway" id="UPA00031">
    <property type="reaction ID" value="UER00010"/>
</dbReference>
<dbReference type="Proteomes" id="UP000000723">
    <property type="component" value="Chromosome"/>
</dbReference>
<dbReference type="GO" id="GO:0005737">
    <property type="term" value="C:cytoplasm"/>
    <property type="evidence" value="ECO:0007669"/>
    <property type="project" value="UniProtKB-SubCell"/>
</dbReference>
<dbReference type="GO" id="GO:0000107">
    <property type="term" value="F:imidazoleglycerol-phosphate synthase activity"/>
    <property type="evidence" value="ECO:0007669"/>
    <property type="project" value="UniProtKB-UniRule"/>
</dbReference>
<dbReference type="GO" id="GO:0016829">
    <property type="term" value="F:lyase activity"/>
    <property type="evidence" value="ECO:0007669"/>
    <property type="project" value="UniProtKB-KW"/>
</dbReference>
<dbReference type="GO" id="GO:0000105">
    <property type="term" value="P:L-histidine biosynthetic process"/>
    <property type="evidence" value="ECO:0007669"/>
    <property type="project" value="UniProtKB-UniRule"/>
</dbReference>
<dbReference type="CDD" id="cd04731">
    <property type="entry name" value="HisF"/>
    <property type="match status" value="1"/>
</dbReference>
<dbReference type="FunFam" id="3.20.20.70:FF:000006">
    <property type="entry name" value="Imidazole glycerol phosphate synthase subunit HisF"/>
    <property type="match status" value="1"/>
</dbReference>
<dbReference type="Gene3D" id="3.20.20.70">
    <property type="entry name" value="Aldolase class I"/>
    <property type="match status" value="1"/>
</dbReference>
<dbReference type="HAMAP" id="MF_01013">
    <property type="entry name" value="HisF"/>
    <property type="match status" value="1"/>
</dbReference>
<dbReference type="InterPro" id="IPR013785">
    <property type="entry name" value="Aldolase_TIM"/>
</dbReference>
<dbReference type="InterPro" id="IPR006062">
    <property type="entry name" value="His_biosynth"/>
</dbReference>
<dbReference type="InterPro" id="IPR004651">
    <property type="entry name" value="HisF"/>
</dbReference>
<dbReference type="InterPro" id="IPR050064">
    <property type="entry name" value="IGPS_HisA/HisF"/>
</dbReference>
<dbReference type="InterPro" id="IPR011060">
    <property type="entry name" value="RibuloseP-bd_barrel"/>
</dbReference>
<dbReference type="NCBIfam" id="TIGR00735">
    <property type="entry name" value="hisF"/>
    <property type="match status" value="1"/>
</dbReference>
<dbReference type="PANTHER" id="PTHR21235:SF2">
    <property type="entry name" value="IMIDAZOLE GLYCEROL PHOSPHATE SYNTHASE HISHF"/>
    <property type="match status" value="1"/>
</dbReference>
<dbReference type="PANTHER" id="PTHR21235">
    <property type="entry name" value="IMIDAZOLE GLYCEROL PHOSPHATE SYNTHASE SUBUNIT HISF/H IGP SYNTHASE SUBUNIT HISF/H"/>
    <property type="match status" value="1"/>
</dbReference>
<dbReference type="Pfam" id="PF00977">
    <property type="entry name" value="His_biosynth"/>
    <property type="match status" value="1"/>
</dbReference>
<dbReference type="SUPFAM" id="SSF51366">
    <property type="entry name" value="Ribulose-phoshate binding barrel"/>
    <property type="match status" value="1"/>
</dbReference>
<sequence>MLAKRIIPCLDVKDGKTVKGINFINFRDAGDAVELGRQYSKQGADELVYLDIIASHEERKTFIELVKKVAANINIPFTVGGGINEMQDVDRLLNAGADKISVNSAALRNPSLIEDIAKNFGSQVCVVAIDAKLEADGQWLCYLNGGRIPTNQYLFKWANEVESRGAGEILFTSITHDGVKNGYANEVLSALTGSLHIPIIASGGAGKQEHFRDAFIIGKADAALAASVFHFGEMNIKVLKNYLWRKGISIRN</sequence>
<organism>
    <name type="scientific">Azobacteroides pseudotrichonymphae genomovar. CFP2</name>
    <dbReference type="NCBI Taxonomy" id="511995"/>
    <lineage>
        <taxon>Bacteria</taxon>
        <taxon>Pseudomonadati</taxon>
        <taxon>Bacteroidota</taxon>
        <taxon>Bacteroidia</taxon>
        <taxon>Bacteroidales</taxon>
        <taxon>Candidatus Azobacteroides</taxon>
    </lineage>
</organism>
<proteinExistence type="inferred from homology"/>
<gene>
    <name evidence="1" type="primary">hisF</name>
    <name type="ordered locus">CFPG_039</name>
</gene>